<feature type="transit peptide" description="Chloroplast" evidence="1">
    <location>
        <begin position="1"/>
        <end position="47"/>
    </location>
</feature>
<feature type="chain" id="PRO_0000001930" description="APO protein 1, chloroplastic">
    <location>
        <begin position="48"/>
        <end position="436"/>
    </location>
</feature>
<feature type="domain" description="APO 1" evidence="2">
    <location>
        <begin position="155"/>
        <end position="240"/>
    </location>
</feature>
<feature type="domain" description="APO 2" evidence="2">
    <location>
        <begin position="329"/>
        <end position="414"/>
    </location>
</feature>
<organism>
    <name type="scientific">Arabidopsis thaliana</name>
    <name type="common">Mouse-ear cress</name>
    <dbReference type="NCBI Taxonomy" id="3702"/>
    <lineage>
        <taxon>Eukaryota</taxon>
        <taxon>Viridiplantae</taxon>
        <taxon>Streptophyta</taxon>
        <taxon>Embryophyta</taxon>
        <taxon>Tracheophyta</taxon>
        <taxon>Spermatophyta</taxon>
        <taxon>Magnoliopsida</taxon>
        <taxon>eudicotyledons</taxon>
        <taxon>Gunneridae</taxon>
        <taxon>Pentapetalae</taxon>
        <taxon>rosids</taxon>
        <taxon>malvids</taxon>
        <taxon>Brassicales</taxon>
        <taxon>Brassicaceae</taxon>
        <taxon>Camelineae</taxon>
        <taxon>Arabidopsis</taxon>
    </lineage>
</organism>
<reference key="1">
    <citation type="journal article" date="2004" name="Plant Cell">
        <title>ACCUMULATION OF PHOTOSYSTEM ONE1, a member of a novel gene family, is required for accumulation of [4Fe-4S] cluster containing chloroplast complexes and antenna proteins.</title>
        <authorList>
            <person name="Amann K."/>
            <person name="Lezhneva L."/>
            <person name="Wanner G."/>
            <person name="Herrmann R.G."/>
            <person name="Meurer J."/>
        </authorList>
    </citation>
    <scope>NUCLEOTIDE SEQUENCE [MRNA]</scope>
    <scope>FUNCTION</scope>
    <scope>TISSUE SPECIFICITY</scope>
    <scope>INDUCTION</scope>
    <scope>DISRUPTION PHENOTYPE</scope>
</reference>
<reference key="2">
    <citation type="journal article" date="2000" name="Nature">
        <title>Sequence and analysis of chromosome 1 of the plant Arabidopsis thaliana.</title>
        <authorList>
            <person name="Theologis A."/>
            <person name="Ecker J.R."/>
            <person name="Palm C.J."/>
            <person name="Federspiel N.A."/>
            <person name="Kaul S."/>
            <person name="White O."/>
            <person name="Alonso J."/>
            <person name="Altafi H."/>
            <person name="Araujo R."/>
            <person name="Bowman C.L."/>
            <person name="Brooks S.Y."/>
            <person name="Buehler E."/>
            <person name="Chan A."/>
            <person name="Chao Q."/>
            <person name="Chen H."/>
            <person name="Cheuk R.F."/>
            <person name="Chin C.W."/>
            <person name="Chung M.K."/>
            <person name="Conn L."/>
            <person name="Conway A.B."/>
            <person name="Conway A.R."/>
            <person name="Creasy T.H."/>
            <person name="Dewar K."/>
            <person name="Dunn P."/>
            <person name="Etgu P."/>
            <person name="Feldblyum T.V."/>
            <person name="Feng J.-D."/>
            <person name="Fong B."/>
            <person name="Fujii C.Y."/>
            <person name="Gill J.E."/>
            <person name="Goldsmith A.D."/>
            <person name="Haas B."/>
            <person name="Hansen N.F."/>
            <person name="Hughes B."/>
            <person name="Huizar L."/>
            <person name="Hunter J.L."/>
            <person name="Jenkins J."/>
            <person name="Johnson-Hopson C."/>
            <person name="Khan S."/>
            <person name="Khaykin E."/>
            <person name="Kim C.J."/>
            <person name="Koo H.L."/>
            <person name="Kremenetskaia I."/>
            <person name="Kurtz D.B."/>
            <person name="Kwan A."/>
            <person name="Lam B."/>
            <person name="Langin-Hooper S."/>
            <person name="Lee A."/>
            <person name="Lee J.M."/>
            <person name="Lenz C.A."/>
            <person name="Li J.H."/>
            <person name="Li Y.-P."/>
            <person name="Lin X."/>
            <person name="Liu S.X."/>
            <person name="Liu Z.A."/>
            <person name="Luros J.S."/>
            <person name="Maiti R."/>
            <person name="Marziali A."/>
            <person name="Militscher J."/>
            <person name="Miranda M."/>
            <person name="Nguyen M."/>
            <person name="Nierman W.C."/>
            <person name="Osborne B.I."/>
            <person name="Pai G."/>
            <person name="Peterson J."/>
            <person name="Pham P.K."/>
            <person name="Rizzo M."/>
            <person name="Rooney T."/>
            <person name="Rowley D."/>
            <person name="Sakano H."/>
            <person name="Salzberg S.L."/>
            <person name="Schwartz J.R."/>
            <person name="Shinn P."/>
            <person name="Southwick A.M."/>
            <person name="Sun H."/>
            <person name="Tallon L.J."/>
            <person name="Tambunga G."/>
            <person name="Toriumi M.J."/>
            <person name="Town C.D."/>
            <person name="Utterback T."/>
            <person name="Van Aken S."/>
            <person name="Vaysberg M."/>
            <person name="Vysotskaia V.S."/>
            <person name="Walker M."/>
            <person name="Wu D."/>
            <person name="Yu G."/>
            <person name="Fraser C.M."/>
            <person name="Venter J.C."/>
            <person name="Davis R.W."/>
        </authorList>
    </citation>
    <scope>NUCLEOTIDE SEQUENCE [LARGE SCALE GENOMIC DNA]</scope>
    <source>
        <strain>cv. Columbia</strain>
    </source>
</reference>
<reference key="3">
    <citation type="journal article" date="2017" name="Plant J.">
        <title>Araport11: a complete reannotation of the Arabidopsis thaliana reference genome.</title>
        <authorList>
            <person name="Cheng C.Y."/>
            <person name="Krishnakumar V."/>
            <person name="Chan A.P."/>
            <person name="Thibaud-Nissen F."/>
            <person name="Schobel S."/>
            <person name="Town C.D."/>
        </authorList>
    </citation>
    <scope>GENOME REANNOTATION</scope>
    <source>
        <strain>cv. Columbia</strain>
    </source>
</reference>
<keyword id="KW-0025">Alternative splicing</keyword>
<keyword id="KW-0150">Chloroplast</keyword>
<keyword id="KW-0934">Plastid</keyword>
<keyword id="KW-1185">Reference proteome</keyword>
<keyword id="KW-0677">Repeat</keyword>
<keyword id="KW-0809">Transit peptide</keyword>
<protein>
    <recommendedName>
        <fullName>APO protein 1, chloroplastic</fullName>
    </recommendedName>
    <alternativeName>
        <fullName>Accumulation of photosystem I protein 1</fullName>
    </alternativeName>
    <alternativeName>
        <fullName>Protein ACCUMULATION OF PHOTOSYSTEM ONE 1</fullName>
    </alternativeName>
</protein>
<gene>
    <name type="primary">APO1</name>
    <name type="ordered locus">At1g64810</name>
    <name type="ORF">F13O11.11</name>
</gene>
<name>APO1_ARATH</name>
<sequence length="436" mass="49627">MLLVSPACRGVYLQTIDPKPIDFSARASYALCFQIPTSIPKRECLMRLGTVFCFNQKHREQTSFKKRYVSTQNVDLPPILPKNKKKPYPIPFKQIQEEARKDKKLAQMGIEKQLDPPKNGLLVPNLVPVADQVIDNWKLLIKGLAQLLHVVPVFACSECGAVHVANVGHNIRDCNGPTNSQRRGSHSWVKGTINDVLIPVESYHMYDPFGRRIKHETRFEYERIPALVELCIQAGVEIPEYPCRRRTQPIRMMGKRVIDRGGYHKEPEKPQTSSSLSSPLAELDTLGVFERYPPPTPEDIPKIAQETMDAYEKVRLGVTKLMRKFTVKACGYCSEVHVGPWGHSVKLCGEFKHQWRDGKHGWQDALVDEVFPPNYVWHVRDLKGNPLTGNLRRFYGKAPALVEICMHSGARVPQRYKAMMRLDIIVPDSQEADMVA</sequence>
<comment type="function">
    <text evidence="3">Involved in the stable assembly of several 4Fe-4S cluster-containing complexes of chloroplasts. May participate in 4Fe-4S cofactor incorporation into psaA and/or psaB during translation.</text>
</comment>
<comment type="subcellular location">
    <subcellularLocation>
        <location>Plastid</location>
        <location>Chloroplast</location>
    </subcellularLocation>
</comment>
<comment type="alternative products">
    <event type="alternative splicing"/>
    <isoform>
        <id>Q9XIR4-1</id>
        <name>1</name>
        <sequence type="displayed"/>
    </isoform>
    <text>A number of isoforms are produced. According to EST sequences.</text>
</comment>
<comment type="tissue specificity">
    <text evidence="3">Expressed at low level. Expressed at higher level in leaves. Expressed at lower level in roots, stems, siliques and flowers.</text>
</comment>
<comment type="induction">
    <text evidence="3">Up-regulated during photomorphogenesis.</text>
</comment>
<comment type="domain">
    <text evidence="4">The APO repeats may provide ligands for 4Fe-4S centers.</text>
</comment>
<comment type="disruption phenotype">
    <text evidence="3">Plants fail to accumulate significant amounts of the outer antenna subunits of PSI and PSII and to form grana stacks. 2Fe-2S cluster-containing complexes appear to be unaffected.</text>
</comment>
<comment type="similarity">
    <text evidence="2">Belongs to the APO family.</text>
</comment>
<proteinExistence type="evidence at transcript level"/>
<accession>Q9XIR4</accession>
<dbReference type="EMBL" id="AY466161">
    <property type="protein sequence ID" value="AAS45665.1"/>
    <property type="molecule type" value="mRNA"/>
</dbReference>
<dbReference type="EMBL" id="AC006193">
    <property type="protein sequence ID" value="AAD38255.1"/>
    <property type="molecule type" value="Genomic_DNA"/>
</dbReference>
<dbReference type="EMBL" id="CP002684">
    <property type="protein sequence ID" value="AEE34292.1"/>
    <property type="molecule type" value="Genomic_DNA"/>
</dbReference>
<dbReference type="PIR" id="C96671">
    <property type="entry name" value="C96671"/>
</dbReference>
<dbReference type="RefSeq" id="NP_176661.1">
    <molecule id="Q9XIR4-1"/>
    <property type="nucleotide sequence ID" value="NM_105155.4"/>
</dbReference>
<dbReference type="FunCoup" id="Q9XIR4">
    <property type="interactions" value="1286"/>
</dbReference>
<dbReference type="STRING" id="3702.Q9XIR4"/>
<dbReference type="GlyGen" id="Q9XIR4">
    <property type="glycosylation" value="1 site"/>
</dbReference>
<dbReference type="PaxDb" id="3702-AT1G64810.2"/>
<dbReference type="ProteomicsDB" id="240599">
    <molecule id="Q9XIR4-1"/>
</dbReference>
<dbReference type="EnsemblPlants" id="AT1G64810.1">
    <molecule id="Q9XIR4-1"/>
    <property type="protein sequence ID" value="AT1G64810.1"/>
    <property type="gene ID" value="AT1G64810"/>
</dbReference>
<dbReference type="GeneID" id="842789"/>
<dbReference type="Gramene" id="AT1G64810.1">
    <molecule id="Q9XIR4-1"/>
    <property type="protein sequence ID" value="AT1G64810.1"/>
    <property type="gene ID" value="AT1G64810"/>
</dbReference>
<dbReference type="KEGG" id="ath:AT1G64810"/>
<dbReference type="Araport" id="AT1G64810"/>
<dbReference type="TAIR" id="AT1G64810">
    <property type="gene designation" value="APO1"/>
</dbReference>
<dbReference type="eggNOG" id="ENOG502QPNK">
    <property type="taxonomic scope" value="Eukaryota"/>
</dbReference>
<dbReference type="HOGENOM" id="CLU_033199_0_1_1"/>
<dbReference type="InParanoid" id="Q9XIR4"/>
<dbReference type="PhylomeDB" id="Q9XIR4"/>
<dbReference type="PRO" id="PR:Q9XIR4"/>
<dbReference type="Proteomes" id="UP000006548">
    <property type="component" value="Chromosome 1"/>
</dbReference>
<dbReference type="ExpressionAtlas" id="Q9XIR4">
    <property type="expression patterns" value="baseline and differential"/>
</dbReference>
<dbReference type="GO" id="GO:0009507">
    <property type="term" value="C:chloroplast"/>
    <property type="evidence" value="ECO:0007669"/>
    <property type="project" value="UniProtKB-SubCell"/>
</dbReference>
<dbReference type="GO" id="GO:0003723">
    <property type="term" value="F:RNA binding"/>
    <property type="evidence" value="ECO:0007669"/>
    <property type="project" value="InterPro"/>
</dbReference>
<dbReference type="InterPro" id="IPR023342">
    <property type="entry name" value="APO_dom"/>
</dbReference>
<dbReference type="PANTHER" id="PTHR10388">
    <property type="entry name" value="EUKARYOTIC TRANSLATION INITIATION FACTOR SUI1"/>
    <property type="match status" value="1"/>
</dbReference>
<dbReference type="Pfam" id="PF05634">
    <property type="entry name" value="APO_RNA-bind"/>
    <property type="match status" value="2"/>
</dbReference>
<dbReference type="PROSITE" id="PS51499">
    <property type="entry name" value="APO"/>
    <property type="match status" value="2"/>
</dbReference>
<evidence type="ECO:0000255" key="1"/>
<evidence type="ECO:0000255" key="2">
    <source>
        <dbReference type="PROSITE-ProRule" id="PRU00832"/>
    </source>
</evidence>
<evidence type="ECO:0000269" key="3">
    <source>
    </source>
</evidence>
<evidence type="ECO:0000305" key="4"/>